<organism>
    <name type="scientific">Arabidopsis thaliana</name>
    <name type="common">Mouse-ear cress</name>
    <dbReference type="NCBI Taxonomy" id="3702"/>
    <lineage>
        <taxon>Eukaryota</taxon>
        <taxon>Viridiplantae</taxon>
        <taxon>Streptophyta</taxon>
        <taxon>Embryophyta</taxon>
        <taxon>Tracheophyta</taxon>
        <taxon>Spermatophyta</taxon>
        <taxon>Magnoliopsida</taxon>
        <taxon>eudicotyledons</taxon>
        <taxon>Gunneridae</taxon>
        <taxon>Pentapetalae</taxon>
        <taxon>rosids</taxon>
        <taxon>malvids</taxon>
        <taxon>Brassicales</taxon>
        <taxon>Brassicaceae</taxon>
        <taxon>Camelineae</taxon>
        <taxon>Arabidopsis</taxon>
    </lineage>
</organism>
<feature type="chain" id="PRO_0000356087" description="Pentatricopeptide repeat-containing protein At3g13880">
    <location>
        <begin position="1"/>
        <end position="748"/>
    </location>
</feature>
<feature type="repeat" description="PPR 1">
    <location>
        <begin position="46"/>
        <end position="80"/>
    </location>
</feature>
<feature type="repeat" description="PPR 2">
    <location>
        <begin position="81"/>
        <end position="111"/>
    </location>
</feature>
<feature type="repeat" description="PPR 3">
    <location>
        <begin position="112"/>
        <end position="146"/>
    </location>
</feature>
<feature type="repeat" description="PPR 4">
    <location>
        <begin position="147"/>
        <end position="181"/>
    </location>
</feature>
<feature type="repeat" description="PPR 5">
    <location>
        <begin position="182"/>
        <end position="212"/>
    </location>
</feature>
<feature type="repeat" description="PPR 6">
    <location>
        <begin position="213"/>
        <end position="247"/>
    </location>
</feature>
<feature type="repeat" description="PPR 7">
    <location>
        <begin position="248"/>
        <end position="285"/>
    </location>
</feature>
<feature type="repeat" description="PPR 8">
    <location>
        <begin position="286"/>
        <end position="316"/>
    </location>
</feature>
<feature type="repeat" description="PPR 9">
    <location>
        <begin position="317"/>
        <end position="356"/>
    </location>
</feature>
<feature type="repeat" description="PPR 10">
    <location>
        <begin position="357"/>
        <end position="391"/>
    </location>
</feature>
<feature type="repeat" description="PPR 11">
    <location>
        <begin position="392"/>
        <end position="422"/>
    </location>
</feature>
<feature type="repeat" description="PPR 12">
    <location>
        <begin position="423"/>
        <end position="457"/>
    </location>
</feature>
<feature type="repeat" description="PPR 13">
    <location>
        <begin position="458"/>
        <end position="492"/>
    </location>
</feature>
<feature type="repeat" description="PPR 14">
    <location>
        <begin position="493"/>
        <end position="523"/>
    </location>
</feature>
<feature type="repeat" description="PPR 15">
    <location>
        <begin position="524"/>
        <end position="558"/>
    </location>
</feature>
<feature type="repeat" description="PPR 16">
    <location>
        <begin position="559"/>
        <end position="589"/>
    </location>
</feature>
<feature type="repeat" description="PPR 17">
    <location>
        <begin position="595"/>
        <end position="629"/>
    </location>
</feature>
<feature type="region of interest" description="Type E motif">
    <location>
        <begin position="630"/>
        <end position="705"/>
    </location>
</feature>
<feature type="region of interest" description="Type E(+) motif">
    <location>
        <begin position="706"/>
        <end position="736"/>
    </location>
</feature>
<proteinExistence type="evidence at transcript level"/>
<reference key="1">
    <citation type="journal article" date="2000" name="DNA Res.">
        <title>Structural analysis of Arabidopsis thaliana chromosome 3. I. Sequence features of the regions of 4,504,864 bp covered by sixty P1 and TAC clones.</title>
        <authorList>
            <person name="Sato S."/>
            <person name="Nakamura Y."/>
            <person name="Kaneko T."/>
            <person name="Katoh T."/>
            <person name="Asamizu E."/>
            <person name="Tabata S."/>
        </authorList>
    </citation>
    <scope>NUCLEOTIDE SEQUENCE [LARGE SCALE GENOMIC DNA]</scope>
    <source>
        <strain>cv. Columbia</strain>
    </source>
</reference>
<reference key="2">
    <citation type="journal article" date="2017" name="Plant J.">
        <title>Araport11: a complete reannotation of the Arabidopsis thaliana reference genome.</title>
        <authorList>
            <person name="Cheng C.Y."/>
            <person name="Krishnakumar V."/>
            <person name="Chan A.P."/>
            <person name="Thibaud-Nissen F."/>
            <person name="Schobel S."/>
            <person name="Town C.D."/>
        </authorList>
    </citation>
    <scope>GENOME REANNOTATION</scope>
    <source>
        <strain>cv. Columbia</strain>
    </source>
</reference>
<reference key="3">
    <citation type="journal article" date="2004" name="Genome Res.">
        <title>Whole genome sequence comparisons and 'full-length' cDNA sequences: a combined approach to evaluate and improve Arabidopsis genome annotation.</title>
        <authorList>
            <person name="Castelli V."/>
            <person name="Aury J.-M."/>
            <person name="Jaillon O."/>
            <person name="Wincker P."/>
            <person name="Clepet C."/>
            <person name="Menard M."/>
            <person name="Cruaud C."/>
            <person name="Quetier F."/>
            <person name="Scarpelli C."/>
            <person name="Schaechter V."/>
            <person name="Temple G."/>
            <person name="Caboche M."/>
            <person name="Weissenbach J."/>
            <person name="Salanoubat M."/>
        </authorList>
    </citation>
    <scope>NUCLEOTIDE SEQUENCE [LARGE SCALE MRNA] OF 642-748</scope>
    <source>
        <strain>cv. Columbia</strain>
    </source>
</reference>
<reference key="4">
    <citation type="journal article" date="2004" name="Plant Cell">
        <title>Genome-wide analysis of Arabidopsis pentatricopeptide repeat proteins reveals their essential role in organelle biogenesis.</title>
        <authorList>
            <person name="Lurin C."/>
            <person name="Andres C."/>
            <person name="Aubourg S."/>
            <person name="Bellaoui M."/>
            <person name="Bitton F."/>
            <person name="Bruyere C."/>
            <person name="Caboche M."/>
            <person name="Debast C."/>
            <person name="Gualberto J."/>
            <person name="Hoffmann B."/>
            <person name="Lecharny A."/>
            <person name="Le Ret M."/>
            <person name="Martin-Magniette M.-L."/>
            <person name="Mireau H."/>
            <person name="Peeters N."/>
            <person name="Renou J.-P."/>
            <person name="Szurek B."/>
            <person name="Taconnat L."/>
            <person name="Small I."/>
        </authorList>
    </citation>
    <scope>GENE FAMILY</scope>
</reference>
<keyword id="KW-1185">Reference proteome</keyword>
<keyword id="KW-0677">Repeat</keyword>
<gene>
    <name type="primary">PCMP-E89</name>
    <name type="ordered locus">At3g13880</name>
    <name type="ORF">MCP4.10</name>
</gene>
<comment type="similarity">
    <text evidence="1">Belongs to the PPR family. PCMP-E subfamily.</text>
</comment>
<comment type="online information" name="Pentatricopeptide repeat proteins">
    <link uri="https://ppr.plantenergy.uwa.edu.au"/>
</comment>
<protein>
    <recommendedName>
        <fullName>Pentatricopeptide repeat-containing protein At3g13880</fullName>
    </recommendedName>
</protein>
<evidence type="ECO:0000305" key="1"/>
<sequence>MLLQFRAKTFFNNIAQDSLVTLITKRVGLGYRFLSSLCQPKNTALDSEGYKILFQTAAKSGSVVLGKLAHGHMIKSSLNPCLYLLNNLLNMYCKCRELGFARQLFDRMPERNIISFNSLISGYTQMGFYEQAMELFLEAREANLKLDKFTYAGALGFCGERCDLDLGELLHGLVVVNGLSQQVFLINVLIDMYSKCGKLDQAMSLFDRCDERDQVSWNSLISGYVRVGAAEEPLNLLAKMHRDGLNLTTYALGSVLKACCINLNEGFIEKGMAIHCYTAKLGMEFDIVVRTALLDMYAKNGSLKEAIKLFSLMPSKNVVTYNAMISGFLQMDEITDEASSEAFKLFMDMQRRGLEPSPSTFSVVLKACSAAKTLEYGRQIHALICKNNFQSDEFIGSALIELYALMGSTEDGMQCFASTSKQDIASWTSMIDCHVQNEQLESAFDLFRQLFSSHIRPEEYTVSLMMSACADFAALSSGEQIQGYAIKSGIDAFTSVKTSSISMYAKSGNMPLANQVFIEVQNPDVATYSAMISSLAQHGSANEALNIFESMKTHGIKPNQQAFLGVLIACCHGGLVTQGLKYFQCMKNDYRINPNEKHFTCLVDLLGRTGRLSDAENLILSSGFQDHPVTWRALLSSCRVYKDSVIGKRVAERLMELEPEASGSYVLLHNIYNDSGVNSSAEEVRELMRDRGVKKEPALSWIVIGNQTHSFAVADLSHPSSQMIYTMLETMDNVDFVDYTLVHFCSVT</sequence>
<name>PP228_ARATH</name>
<dbReference type="EMBL" id="AB028610">
    <property type="protein sequence ID" value="BAB02912.1"/>
    <property type="molecule type" value="Genomic_DNA"/>
</dbReference>
<dbReference type="EMBL" id="CP002686">
    <property type="protein sequence ID" value="AEE75430.1"/>
    <property type="molecule type" value="Genomic_DNA"/>
</dbReference>
<dbReference type="EMBL" id="BX824350">
    <property type="status" value="NOT_ANNOTATED_CDS"/>
    <property type="molecule type" value="mRNA"/>
</dbReference>
<dbReference type="RefSeq" id="NP_188004.1">
    <property type="nucleotide sequence ID" value="NM_112242.3"/>
</dbReference>
<dbReference type="SMR" id="Q9LRV9"/>
<dbReference type="FunCoup" id="Q9LRV9">
    <property type="interactions" value="73"/>
</dbReference>
<dbReference type="STRING" id="3702.Q9LRV9"/>
<dbReference type="PaxDb" id="3702-AT3G13880.1"/>
<dbReference type="ProteomicsDB" id="249093"/>
<dbReference type="EnsemblPlants" id="AT3G13880.1">
    <property type="protein sequence ID" value="AT3G13880.1"/>
    <property type="gene ID" value="AT3G13880"/>
</dbReference>
<dbReference type="GeneID" id="820601"/>
<dbReference type="Gramene" id="AT3G13880.1">
    <property type="protein sequence ID" value="AT3G13880.1"/>
    <property type="gene ID" value="AT3G13880"/>
</dbReference>
<dbReference type="KEGG" id="ath:AT3G13880"/>
<dbReference type="Araport" id="AT3G13880"/>
<dbReference type="TAIR" id="AT3G13880">
    <property type="gene designation" value="OTP72"/>
</dbReference>
<dbReference type="eggNOG" id="KOG4197">
    <property type="taxonomic scope" value="Eukaryota"/>
</dbReference>
<dbReference type="HOGENOM" id="CLU_002706_15_1_1"/>
<dbReference type="InParanoid" id="Q9LRV9"/>
<dbReference type="OMA" id="HSTMKLI"/>
<dbReference type="OrthoDB" id="1860728at2759"/>
<dbReference type="PhylomeDB" id="Q9LRV9"/>
<dbReference type="PRO" id="PR:Q9LRV9"/>
<dbReference type="Proteomes" id="UP000006548">
    <property type="component" value="Chromosome 3"/>
</dbReference>
<dbReference type="ExpressionAtlas" id="Q9LRV9">
    <property type="expression patterns" value="baseline and differential"/>
</dbReference>
<dbReference type="GO" id="GO:0005739">
    <property type="term" value="C:mitochondrion"/>
    <property type="evidence" value="ECO:0007669"/>
    <property type="project" value="GOC"/>
</dbReference>
<dbReference type="GO" id="GO:0003723">
    <property type="term" value="F:RNA binding"/>
    <property type="evidence" value="ECO:0007669"/>
    <property type="project" value="InterPro"/>
</dbReference>
<dbReference type="GO" id="GO:1900864">
    <property type="term" value="P:mitochondrial RNA modification"/>
    <property type="evidence" value="ECO:0000315"/>
    <property type="project" value="TAIR"/>
</dbReference>
<dbReference type="FunFam" id="1.25.40.10:FF:000227">
    <property type="entry name" value="Pentatricopeptide repeat-containing protein At3g13880"/>
    <property type="match status" value="1"/>
</dbReference>
<dbReference type="FunFam" id="1.25.40.10:FF:000692">
    <property type="entry name" value="Pentatricopeptide repeat-containing protein At3g13880"/>
    <property type="match status" value="1"/>
</dbReference>
<dbReference type="FunFam" id="1.25.40.10:FF:000776">
    <property type="entry name" value="Pentatricopeptide repeat-containing protein At3g13880"/>
    <property type="match status" value="1"/>
</dbReference>
<dbReference type="FunFam" id="1.25.40.10:FF:001495">
    <property type="entry name" value="Pentatricopeptide repeat-containing protein At3g13880"/>
    <property type="match status" value="1"/>
</dbReference>
<dbReference type="Gene3D" id="1.25.40.10">
    <property type="entry name" value="Tetratricopeptide repeat domain"/>
    <property type="match status" value="5"/>
</dbReference>
<dbReference type="InterPro" id="IPR046848">
    <property type="entry name" value="E_motif"/>
</dbReference>
<dbReference type="InterPro" id="IPR002885">
    <property type="entry name" value="Pentatricopeptide_rpt"/>
</dbReference>
<dbReference type="InterPro" id="IPR046960">
    <property type="entry name" value="PPR_At4g14850-like_plant"/>
</dbReference>
<dbReference type="InterPro" id="IPR011990">
    <property type="entry name" value="TPR-like_helical_dom_sf"/>
</dbReference>
<dbReference type="NCBIfam" id="TIGR00756">
    <property type="entry name" value="PPR"/>
    <property type="match status" value="6"/>
</dbReference>
<dbReference type="PANTHER" id="PTHR24015">
    <property type="entry name" value="OS07G0578800 PROTEIN-RELATED"/>
    <property type="match status" value="1"/>
</dbReference>
<dbReference type="Pfam" id="PF20431">
    <property type="entry name" value="E_motif"/>
    <property type="match status" value="1"/>
</dbReference>
<dbReference type="Pfam" id="PF01535">
    <property type="entry name" value="PPR"/>
    <property type="match status" value="4"/>
</dbReference>
<dbReference type="Pfam" id="PF13041">
    <property type="entry name" value="PPR_2"/>
    <property type="match status" value="3"/>
</dbReference>
<dbReference type="PROSITE" id="PS51375">
    <property type="entry name" value="PPR"/>
    <property type="match status" value="15"/>
</dbReference>
<accession>Q9LRV9</accession>